<gene>
    <name type="ordered locus">At4g27130</name>
    <name type="ORF">F20D21.11</name>
    <name type="ORF">T24A18.80</name>
</gene>
<dbReference type="EMBL" id="U81042">
    <property type="protein sequence ID" value="AAB68033.1"/>
    <property type="molecule type" value="Genomic_DNA"/>
</dbReference>
<dbReference type="EMBL" id="AL035680">
    <property type="protein sequence ID" value="CAB38843.1"/>
    <property type="molecule type" value="Genomic_DNA"/>
</dbReference>
<dbReference type="EMBL" id="AL161566">
    <property type="protein sequence ID" value="CAB79568.1"/>
    <property type="molecule type" value="Genomic_DNA"/>
</dbReference>
<dbReference type="EMBL" id="CP002687">
    <property type="protein sequence ID" value="AEE85305.1"/>
    <property type="molecule type" value="Genomic_DNA"/>
</dbReference>
<dbReference type="EMBL" id="AY037234">
    <property type="protein sequence ID" value="AAK59834.1"/>
    <property type="molecule type" value="mRNA"/>
</dbReference>
<dbReference type="EMBL" id="AY060537">
    <property type="protein sequence ID" value="AAL31168.1"/>
    <property type="molecule type" value="mRNA"/>
</dbReference>
<dbReference type="EMBL" id="AY088288">
    <property type="protein sequence ID" value="AAM65827.1"/>
    <property type="molecule type" value="mRNA"/>
</dbReference>
<dbReference type="PIR" id="T06043">
    <property type="entry name" value="T06043"/>
</dbReference>
<dbReference type="RefSeq" id="NP_194443.1">
    <property type="nucleotide sequence ID" value="NM_118847.4"/>
</dbReference>
<dbReference type="SMR" id="P41568"/>
<dbReference type="BioGRID" id="14108">
    <property type="interactions" value="3"/>
</dbReference>
<dbReference type="FunCoup" id="P41568">
    <property type="interactions" value="3332"/>
</dbReference>
<dbReference type="IntAct" id="P41568">
    <property type="interactions" value="2"/>
</dbReference>
<dbReference type="STRING" id="3702.P41568"/>
<dbReference type="iPTMnet" id="P41568"/>
<dbReference type="PaxDb" id="3702-AT4G27130.1"/>
<dbReference type="ProteomicsDB" id="245242"/>
<dbReference type="EnsemblPlants" id="AT4G27130.1">
    <property type="protein sequence ID" value="AT4G27130.1"/>
    <property type="gene ID" value="AT4G27130"/>
</dbReference>
<dbReference type="GeneID" id="828821"/>
<dbReference type="Gramene" id="AT4G27130.1">
    <property type="protein sequence ID" value="AT4G27130.1"/>
    <property type="gene ID" value="AT4G27130"/>
</dbReference>
<dbReference type="KEGG" id="ath:AT4G27130"/>
<dbReference type="Araport" id="AT4G27130"/>
<dbReference type="TAIR" id="AT4G27130"/>
<dbReference type="eggNOG" id="KOG1770">
    <property type="taxonomic scope" value="Eukaryota"/>
</dbReference>
<dbReference type="HOGENOM" id="CLU_082805_3_0_1"/>
<dbReference type="InParanoid" id="P41568"/>
<dbReference type="OMA" id="NVRQWLI"/>
<dbReference type="OrthoDB" id="10248435at2759"/>
<dbReference type="PhylomeDB" id="P41568"/>
<dbReference type="PRO" id="PR:P41568"/>
<dbReference type="Proteomes" id="UP000006548">
    <property type="component" value="Chromosome 4"/>
</dbReference>
<dbReference type="ExpressionAtlas" id="P41568">
    <property type="expression patterns" value="baseline and differential"/>
</dbReference>
<dbReference type="GO" id="GO:0005829">
    <property type="term" value="C:cytosol"/>
    <property type="evidence" value="ECO:0007005"/>
    <property type="project" value="TAIR"/>
</dbReference>
<dbReference type="GO" id="GO:0003729">
    <property type="term" value="F:mRNA binding"/>
    <property type="evidence" value="ECO:0000314"/>
    <property type="project" value="TAIR"/>
</dbReference>
<dbReference type="GO" id="GO:0003743">
    <property type="term" value="F:translation initiation factor activity"/>
    <property type="evidence" value="ECO:0007669"/>
    <property type="project" value="InterPro"/>
</dbReference>
<dbReference type="GO" id="GO:0006417">
    <property type="term" value="P:regulation of translation"/>
    <property type="evidence" value="ECO:0007669"/>
    <property type="project" value="UniProtKB-KW"/>
</dbReference>
<dbReference type="CDD" id="cd11566">
    <property type="entry name" value="eIF1_SUI1"/>
    <property type="match status" value="1"/>
</dbReference>
<dbReference type="FunFam" id="3.30.780.10:FF:000001">
    <property type="entry name" value="Eukaryotic translation initiation factor SUI1"/>
    <property type="match status" value="1"/>
</dbReference>
<dbReference type="Gene3D" id="3.30.780.10">
    <property type="entry name" value="SUI1-like domain"/>
    <property type="match status" value="1"/>
</dbReference>
<dbReference type="InterPro" id="IPR001950">
    <property type="entry name" value="SUI1"/>
</dbReference>
<dbReference type="InterPro" id="IPR036877">
    <property type="entry name" value="SUI1_dom_sf"/>
</dbReference>
<dbReference type="InterPro" id="IPR005874">
    <property type="entry name" value="SUI1_euk"/>
</dbReference>
<dbReference type="NCBIfam" id="TIGR01160">
    <property type="entry name" value="SUI1_MOF2"/>
    <property type="match status" value="1"/>
</dbReference>
<dbReference type="PANTHER" id="PTHR10388">
    <property type="entry name" value="EUKARYOTIC TRANSLATION INITIATION FACTOR SUI1"/>
    <property type="match status" value="1"/>
</dbReference>
<dbReference type="Pfam" id="PF01253">
    <property type="entry name" value="SUI1"/>
    <property type="match status" value="1"/>
</dbReference>
<dbReference type="PIRSF" id="PIRSF004499">
    <property type="entry name" value="SUI1_euk"/>
    <property type="match status" value="1"/>
</dbReference>
<dbReference type="SUPFAM" id="SSF55159">
    <property type="entry name" value="eIF1-like"/>
    <property type="match status" value="1"/>
</dbReference>
<dbReference type="PROSITE" id="PS50296">
    <property type="entry name" value="SUI1"/>
    <property type="match status" value="1"/>
</dbReference>
<organism>
    <name type="scientific">Arabidopsis thaliana</name>
    <name type="common">Mouse-ear cress</name>
    <dbReference type="NCBI Taxonomy" id="3702"/>
    <lineage>
        <taxon>Eukaryota</taxon>
        <taxon>Viridiplantae</taxon>
        <taxon>Streptophyta</taxon>
        <taxon>Embryophyta</taxon>
        <taxon>Tracheophyta</taxon>
        <taxon>Spermatophyta</taxon>
        <taxon>Magnoliopsida</taxon>
        <taxon>eudicotyledons</taxon>
        <taxon>Gunneridae</taxon>
        <taxon>Pentapetalae</taxon>
        <taxon>rosids</taxon>
        <taxon>malvids</taxon>
        <taxon>Brassicales</taxon>
        <taxon>Brassicaceae</taxon>
        <taxon>Camelineae</taxon>
        <taxon>Arabidopsis</taxon>
    </lineage>
</organism>
<proteinExistence type="evidence at protein level"/>
<protein>
    <recommendedName>
        <fullName>Protein translation factor SUI1 homolog 1</fullName>
    </recommendedName>
</protein>
<comment type="function">
    <text>Probably involved in translation.</text>
</comment>
<comment type="similarity">
    <text evidence="2">Belongs to the SUI1 family.</text>
</comment>
<reference key="1">
    <citation type="online journal article" date="1997" name="Plant Gene Register">
        <title>Cloning and sequence analysis of a genomic clone of Arabidopsis encoding a putative translation initiation factor.</title>
        <authorList>
            <person name="Ma H."/>
            <person name="Stack S."/>
            <person name="Odell J.T."/>
        </authorList>
        <locator>PGR97-022</locator>
    </citation>
    <scope>NUCLEOTIDE SEQUENCE</scope>
</reference>
<reference key="2">
    <citation type="journal article" date="1999" name="Nature">
        <title>Sequence and analysis of chromosome 4 of the plant Arabidopsis thaliana.</title>
        <authorList>
            <person name="Mayer K.F.X."/>
            <person name="Schueller C."/>
            <person name="Wambutt R."/>
            <person name="Murphy G."/>
            <person name="Volckaert G."/>
            <person name="Pohl T."/>
            <person name="Duesterhoeft A."/>
            <person name="Stiekema W."/>
            <person name="Entian K.-D."/>
            <person name="Terryn N."/>
            <person name="Harris B."/>
            <person name="Ansorge W."/>
            <person name="Brandt P."/>
            <person name="Grivell L.A."/>
            <person name="Rieger M."/>
            <person name="Weichselgartner M."/>
            <person name="de Simone V."/>
            <person name="Obermaier B."/>
            <person name="Mache R."/>
            <person name="Mueller M."/>
            <person name="Kreis M."/>
            <person name="Delseny M."/>
            <person name="Puigdomenech P."/>
            <person name="Watson M."/>
            <person name="Schmidtheini T."/>
            <person name="Reichert B."/>
            <person name="Portetelle D."/>
            <person name="Perez-Alonso M."/>
            <person name="Boutry M."/>
            <person name="Bancroft I."/>
            <person name="Vos P."/>
            <person name="Hoheisel J."/>
            <person name="Zimmermann W."/>
            <person name="Wedler H."/>
            <person name="Ridley P."/>
            <person name="Langham S.-A."/>
            <person name="McCullagh B."/>
            <person name="Bilham L."/>
            <person name="Robben J."/>
            <person name="van der Schueren J."/>
            <person name="Grymonprez B."/>
            <person name="Chuang Y.-J."/>
            <person name="Vandenbussche F."/>
            <person name="Braeken M."/>
            <person name="Weltjens I."/>
            <person name="Voet M."/>
            <person name="Bastiaens I."/>
            <person name="Aert R."/>
            <person name="Defoor E."/>
            <person name="Weitzenegger T."/>
            <person name="Bothe G."/>
            <person name="Ramsperger U."/>
            <person name="Hilbert H."/>
            <person name="Braun M."/>
            <person name="Holzer E."/>
            <person name="Brandt A."/>
            <person name="Peters S."/>
            <person name="van Staveren M."/>
            <person name="Dirkse W."/>
            <person name="Mooijman P."/>
            <person name="Klein Lankhorst R."/>
            <person name="Rose M."/>
            <person name="Hauf J."/>
            <person name="Koetter P."/>
            <person name="Berneiser S."/>
            <person name="Hempel S."/>
            <person name="Feldpausch M."/>
            <person name="Lamberth S."/>
            <person name="Van den Daele H."/>
            <person name="De Keyser A."/>
            <person name="Buysshaert C."/>
            <person name="Gielen J."/>
            <person name="Villarroel R."/>
            <person name="De Clercq R."/>
            <person name="van Montagu M."/>
            <person name="Rogers J."/>
            <person name="Cronin A."/>
            <person name="Quail M.A."/>
            <person name="Bray-Allen S."/>
            <person name="Clark L."/>
            <person name="Doggett J."/>
            <person name="Hall S."/>
            <person name="Kay M."/>
            <person name="Lennard N."/>
            <person name="McLay K."/>
            <person name="Mayes R."/>
            <person name="Pettett A."/>
            <person name="Rajandream M.A."/>
            <person name="Lyne M."/>
            <person name="Benes V."/>
            <person name="Rechmann S."/>
            <person name="Borkova D."/>
            <person name="Bloecker H."/>
            <person name="Scharfe M."/>
            <person name="Grimm M."/>
            <person name="Loehnert T.-H."/>
            <person name="Dose S."/>
            <person name="de Haan M."/>
            <person name="Maarse A.C."/>
            <person name="Schaefer M."/>
            <person name="Mueller-Auer S."/>
            <person name="Gabel C."/>
            <person name="Fuchs M."/>
            <person name="Fartmann B."/>
            <person name="Granderath K."/>
            <person name="Dauner D."/>
            <person name="Herzl A."/>
            <person name="Neumann S."/>
            <person name="Argiriou A."/>
            <person name="Vitale D."/>
            <person name="Liguori R."/>
            <person name="Piravandi E."/>
            <person name="Massenet O."/>
            <person name="Quigley F."/>
            <person name="Clabauld G."/>
            <person name="Muendlein A."/>
            <person name="Felber R."/>
            <person name="Schnabl S."/>
            <person name="Hiller R."/>
            <person name="Schmidt W."/>
            <person name="Lecharny A."/>
            <person name="Aubourg S."/>
            <person name="Chefdor F."/>
            <person name="Cooke R."/>
            <person name="Berger C."/>
            <person name="Monfort A."/>
            <person name="Casacuberta E."/>
            <person name="Gibbons T."/>
            <person name="Weber N."/>
            <person name="Vandenbol M."/>
            <person name="Bargues M."/>
            <person name="Terol J."/>
            <person name="Torres A."/>
            <person name="Perez-Perez A."/>
            <person name="Purnelle B."/>
            <person name="Bent E."/>
            <person name="Johnson S."/>
            <person name="Tacon D."/>
            <person name="Jesse T."/>
            <person name="Heijnen L."/>
            <person name="Schwarz S."/>
            <person name="Scholler P."/>
            <person name="Heber S."/>
            <person name="Francs P."/>
            <person name="Bielke C."/>
            <person name="Frishman D."/>
            <person name="Haase D."/>
            <person name="Lemcke K."/>
            <person name="Mewes H.-W."/>
            <person name="Stocker S."/>
            <person name="Zaccaria P."/>
            <person name="Bevan M."/>
            <person name="Wilson R.K."/>
            <person name="de la Bastide M."/>
            <person name="Habermann K."/>
            <person name="Parnell L."/>
            <person name="Dedhia N."/>
            <person name="Gnoj L."/>
            <person name="Schutz K."/>
            <person name="Huang E."/>
            <person name="Spiegel L."/>
            <person name="Sekhon M."/>
            <person name="Murray J."/>
            <person name="Sheet P."/>
            <person name="Cordes M."/>
            <person name="Abu-Threideh J."/>
            <person name="Stoneking T."/>
            <person name="Kalicki J."/>
            <person name="Graves T."/>
            <person name="Harmon G."/>
            <person name="Edwards J."/>
            <person name="Latreille P."/>
            <person name="Courtney L."/>
            <person name="Cloud J."/>
            <person name="Abbott A."/>
            <person name="Scott K."/>
            <person name="Johnson D."/>
            <person name="Minx P."/>
            <person name="Bentley D."/>
            <person name="Fulton B."/>
            <person name="Miller N."/>
            <person name="Greco T."/>
            <person name="Kemp K."/>
            <person name="Kramer J."/>
            <person name="Fulton L."/>
            <person name="Mardis E."/>
            <person name="Dante M."/>
            <person name="Pepin K."/>
            <person name="Hillier L.W."/>
            <person name="Nelson J."/>
            <person name="Spieth J."/>
            <person name="Ryan E."/>
            <person name="Andrews S."/>
            <person name="Geisel C."/>
            <person name="Layman D."/>
            <person name="Du H."/>
            <person name="Ali J."/>
            <person name="Berghoff A."/>
            <person name="Jones K."/>
            <person name="Drone K."/>
            <person name="Cotton M."/>
            <person name="Joshu C."/>
            <person name="Antonoiu B."/>
            <person name="Zidanic M."/>
            <person name="Strong C."/>
            <person name="Sun H."/>
            <person name="Lamar B."/>
            <person name="Yordan C."/>
            <person name="Ma P."/>
            <person name="Zhong J."/>
            <person name="Preston R."/>
            <person name="Vil D."/>
            <person name="Shekher M."/>
            <person name="Matero A."/>
            <person name="Shah R."/>
            <person name="Swaby I.K."/>
            <person name="O'Shaughnessy A."/>
            <person name="Rodriguez M."/>
            <person name="Hoffman J."/>
            <person name="Till S."/>
            <person name="Granat S."/>
            <person name="Shohdy N."/>
            <person name="Hasegawa A."/>
            <person name="Hameed A."/>
            <person name="Lodhi M."/>
            <person name="Johnson A."/>
            <person name="Chen E."/>
            <person name="Marra M.A."/>
            <person name="Martienssen R."/>
            <person name="McCombie W.R."/>
        </authorList>
    </citation>
    <scope>NUCLEOTIDE SEQUENCE [LARGE SCALE GENOMIC DNA]</scope>
    <source>
        <strain>cv. Columbia</strain>
    </source>
</reference>
<reference key="3">
    <citation type="journal article" date="2017" name="Plant J.">
        <title>Araport11: a complete reannotation of the Arabidopsis thaliana reference genome.</title>
        <authorList>
            <person name="Cheng C.Y."/>
            <person name="Krishnakumar V."/>
            <person name="Chan A.P."/>
            <person name="Thibaud-Nissen F."/>
            <person name="Schobel S."/>
            <person name="Town C.D."/>
        </authorList>
    </citation>
    <scope>GENOME REANNOTATION</scope>
    <source>
        <strain>cv. Columbia</strain>
    </source>
</reference>
<reference key="4">
    <citation type="journal article" date="2003" name="Science">
        <title>Empirical analysis of transcriptional activity in the Arabidopsis genome.</title>
        <authorList>
            <person name="Yamada K."/>
            <person name="Lim J."/>
            <person name="Dale J.M."/>
            <person name="Chen H."/>
            <person name="Shinn P."/>
            <person name="Palm C.J."/>
            <person name="Southwick A.M."/>
            <person name="Wu H.C."/>
            <person name="Kim C.J."/>
            <person name="Nguyen M."/>
            <person name="Pham P.K."/>
            <person name="Cheuk R.F."/>
            <person name="Karlin-Newmann G."/>
            <person name="Liu S.X."/>
            <person name="Lam B."/>
            <person name="Sakano H."/>
            <person name="Wu T."/>
            <person name="Yu G."/>
            <person name="Miranda M."/>
            <person name="Quach H.L."/>
            <person name="Tripp M."/>
            <person name="Chang C.H."/>
            <person name="Lee J.M."/>
            <person name="Toriumi M.J."/>
            <person name="Chan M.M."/>
            <person name="Tang C.C."/>
            <person name="Onodera C.S."/>
            <person name="Deng J.M."/>
            <person name="Akiyama K."/>
            <person name="Ansari Y."/>
            <person name="Arakawa T."/>
            <person name="Banh J."/>
            <person name="Banno F."/>
            <person name="Bowser L."/>
            <person name="Brooks S.Y."/>
            <person name="Carninci P."/>
            <person name="Chao Q."/>
            <person name="Choy N."/>
            <person name="Enju A."/>
            <person name="Goldsmith A.D."/>
            <person name="Gurjal M."/>
            <person name="Hansen N.F."/>
            <person name="Hayashizaki Y."/>
            <person name="Johnson-Hopson C."/>
            <person name="Hsuan V.W."/>
            <person name="Iida K."/>
            <person name="Karnes M."/>
            <person name="Khan S."/>
            <person name="Koesema E."/>
            <person name="Ishida J."/>
            <person name="Jiang P.X."/>
            <person name="Jones T."/>
            <person name="Kawai J."/>
            <person name="Kamiya A."/>
            <person name="Meyers C."/>
            <person name="Nakajima M."/>
            <person name="Narusaka M."/>
            <person name="Seki M."/>
            <person name="Sakurai T."/>
            <person name="Satou M."/>
            <person name="Tamse R."/>
            <person name="Vaysberg M."/>
            <person name="Wallender E.K."/>
            <person name="Wong C."/>
            <person name="Yamamura Y."/>
            <person name="Yuan S."/>
            <person name="Shinozaki K."/>
            <person name="Davis R.W."/>
            <person name="Theologis A."/>
            <person name="Ecker J.R."/>
        </authorList>
    </citation>
    <scope>NUCLEOTIDE SEQUENCE [LARGE SCALE MRNA]</scope>
    <source>
        <strain>cv. Columbia</strain>
    </source>
</reference>
<reference key="5">
    <citation type="submission" date="2002-03" db="EMBL/GenBank/DDBJ databases">
        <title>Full-length cDNA from Arabidopsis thaliana.</title>
        <authorList>
            <person name="Brover V.V."/>
            <person name="Troukhan M.E."/>
            <person name="Alexandrov N.A."/>
            <person name="Lu Y.-P."/>
            <person name="Flavell R.B."/>
            <person name="Feldmann K.A."/>
        </authorList>
    </citation>
    <scope>NUCLEOTIDE SEQUENCE [LARGE SCALE MRNA]</scope>
</reference>
<reference key="6">
    <citation type="journal article" date="2012" name="Mol. Cell. Proteomics">
        <title>Comparative large-scale characterisation of plant vs. mammal proteins reveals similar and idiosyncratic N-alpha acetylation features.</title>
        <authorList>
            <person name="Bienvenut W.V."/>
            <person name="Sumpton D."/>
            <person name="Martinez A."/>
            <person name="Lilla S."/>
            <person name="Espagne C."/>
            <person name="Meinnel T."/>
            <person name="Giglione C."/>
        </authorList>
    </citation>
    <scope>ACETYLATION [LARGE SCALE ANALYSIS] AT SER-2</scope>
    <scope>CLEAVAGE OF INITIATOR METHIONINE [LARGE SCALE ANALYSIS]</scope>
    <scope>IDENTIFICATION BY MASS SPECTROMETRY [LARGE SCALE ANALYSIS]</scope>
</reference>
<accession>P41568</accession>
<accession>Q9SLK5</accession>
<evidence type="ECO:0000256" key="1">
    <source>
        <dbReference type="SAM" id="MobiDB-lite"/>
    </source>
</evidence>
<evidence type="ECO:0000305" key="2"/>
<evidence type="ECO:0007744" key="3">
    <source>
    </source>
</evidence>
<sequence>MSELDSQVPTAFDPFADANAEDSGAGTKEYVHIRVQQRNGRKSLTTVQGLKKEYSYTKILKDLKKEFCCNGTVVQDSELGQVIQLQGDQRKNVSTFLVQAGLVKKDNIKIHGF</sequence>
<name>SUI11_ARATH</name>
<feature type="initiator methionine" description="Removed" evidence="3">
    <location>
        <position position="1"/>
    </location>
</feature>
<feature type="chain" id="PRO_0000130567" description="Protein translation factor SUI1 homolog 1">
    <location>
        <begin position="2"/>
        <end position="113"/>
    </location>
</feature>
<feature type="region of interest" description="Disordered" evidence="1">
    <location>
        <begin position="1"/>
        <end position="24"/>
    </location>
</feature>
<feature type="modified residue" description="N-acetylserine" evidence="3">
    <location>
        <position position="2"/>
    </location>
</feature>
<keyword id="KW-0007">Acetylation</keyword>
<keyword id="KW-0648">Protein biosynthesis</keyword>
<keyword id="KW-1185">Reference proteome</keyword>
<keyword id="KW-0810">Translation regulation</keyword>